<name>PLST_HUMAN</name>
<gene>
    <name type="primary">PLS3</name>
</gene>
<sequence length="630" mass="70811">MDEMATTQISKDELDELKEAFAKVDLNSNGFICDYELHELFKEANMPLPGYKVREIIQKLMLDGDRNKDGKISFDEFVYIFQEVKSSDIAKTFRKAINRKEGICALGGTSELSSEGTQHSYSEEEKYAFVNWINKALENDPDCRHVIPMNPNTDDLFKAVGDGIVLCKMINLSVPDTIDERAINKKKLTPFIIQENLNLALNSASAIGCHVVNIGAEDLRAGKPHLVLGLLWQIIKIGLFADIELSRNEALAALLRDGETLEELMKLSPEELLLRWANFHLENSGWQKINNFSADIKDSKAYFHLLNQIAPKGQKEGEPRIDINMSGFNETDDLKRAESMLQQADKLGCRQFVTPADVVSGNPKLNLAFVANLFNKYPALTKPENQDIDWTLLEGETREERTFRNWMNSLGVNPHVNHLYADLQDALVILQLYERIKVPVDWSKVNKPPYPKLGANMKKLENCNYAVELGKHPAKFSLVGIGGQDLNDGNQTLTLALVWQLMRRYTLNVLEDLGDGQKANDDIIVNWVNRTLSEAGKSTSIQSFKDKTISSSLAVVDLIDAIQPGCINYDLVKSGNLTEDDKHNNAKYAVSMARRIGARVYALPEDLVEVKPKMVMTVFACLMGRGMKRV</sequence>
<feature type="chain" id="PRO_0000073747" description="Plastin-3">
    <location>
        <begin position="1"/>
        <end position="630"/>
    </location>
</feature>
<feature type="domain" description="EF-hand 1" evidence="3">
    <location>
        <begin position="12"/>
        <end position="47"/>
    </location>
</feature>
<feature type="domain" description="EF-hand 2" evidence="3">
    <location>
        <begin position="52"/>
        <end position="87"/>
    </location>
</feature>
<feature type="domain" description="Calponin-homology (CH) 1" evidence="2">
    <location>
        <begin position="123"/>
        <end position="239"/>
    </location>
</feature>
<feature type="domain" description="Calponin-homology (CH) 2" evidence="2">
    <location>
        <begin position="267"/>
        <end position="378"/>
    </location>
</feature>
<feature type="domain" description="Calponin-homology (CH) 3" evidence="2">
    <location>
        <begin position="397"/>
        <end position="506"/>
    </location>
</feature>
<feature type="domain" description="Calponin-homology (CH) 4" evidence="2">
    <location>
        <begin position="518"/>
        <end position="627"/>
    </location>
</feature>
<feature type="region of interest" description="Actin-binding 1">
    <location>
        <begin position="109"/>
        <end position="382"/>
    </location>
</feature>
<feature type="region of interest" description="Actin-binding 2">
    <location>
        <begin position="383"/>
        <end position="627"/>
    </location>
</feature>
<feature type="binding site" evidence="3">
    <location>
        <position position="25"/>
    </location>
    <ligand>
        <name>Ca(2+)</name>
        <dbReference type="ChEBI" id="CHEBI:29108"/>
        <label>1</label>
    </ligand>
</feature>
<feature type="binding site" evidence="3">
    <location>
        <position position="27"/>
    </location>
    <ligand>
        <name>Ca(2+)</name>
        <dbReference type="ChEBI" id="CHEBI:29108"/>
        <label>1</label>
    </ligand>
</feature>
<feature type="binding site" evidence="3">
    <location>
        <position position="29"/>
    </location>
    <ligand>
        <name>Ca(2+)</name>
        <dbReference type="ChEBI" id="CHEBI:29108"/>
        <label>1</label>
    </ligand>
</feature>
<feature type="binding site" evidence="3">
    <location>
        <position position="36"/>
    </location>
    <ligand>
        <name>Ca(2+)</name>
        <dbReference type="ChEBI" id="CHEBI:29108"/>
        <label>1</label>
    </ligand>
</feature>
<feature type="binding site" evidence="3">
    <location>
        <position position="65"/>
    </location>
    <ligand>
        <name>Ca(2+)</name>
        <dbReference type="ChEBI" id="CHEBI:29108"/>
        <label>2</label>
    </ligand>
</feature>
<feature type="binding site" evidence="3">
    <location>
        <position position="67"/>
    </location>
    <ligand>
        <name>Ca(2+)</name>
        <dbReference type="ChEBI" id="CHEBI:29108"/>
        <label>2</label>
    </ligand>
</feature>
<feature type="binding site" evidence="3">
    <location>
        <position position="69"/>
    </location>
    <ligand>
        <name>Ca(2+)</name>
        <dbReference type="ChEBI" id="CHEBI:29108"/>
        <label>2</label>
    </ligand>
</feature>
<feature type="binding site" evidence="3">
    <location>
        <position position="71"/>
    </location>
    <ligand>
        <name>Ca(2+)</name>
        <dbReference type="ChEBI" id="CHEBI:29108"/>
        <label>2</label>
    </ligand>
</feature>
<feature type="binding site" evidence="3">
    <location>
        <position position="76"/>
    </location>
    <ligand>
        <name>Ca(2+)</name>
        <dbReference type="ChEBI" id="CHEBI:29108"/>
        <label>2</label>
    </ligand>
</feature>
<feature type="modified residue" description="Phosphoserine" evidence="1">
    <location>
        <position position="268"/>
    </location>
</feature>
<feature type="modified residue" description="Phosphoserine" evidence="17 18">
    <location>
        <position position="293"/>
    </location>
</feature>
<feature type="modified residue" description="Phosphoserine" evidence="16 17 18">
    <location>
        <position position="326"/>
    </location>
</feature>
<feature type="modified residue" description="Phosphoserine" evidence="19">
    <location>
        <position position="339"/>
    </location>
</feature>
<feature type="modified residue" description="Phosphothreonine" evidence="16 17">
    <location>
        <position position="391"/>
    </location>
</feature>
<feature type="splice variant" id="VSP_056235" description="In isoform 3." evidence="14">
    <location>
        <begin position="1"/>
        <end position="45"/>
    </location>
</feature>
<feature type="splice variant" id="VSP_056236" description="In isoform 2." evidence="11">
    <original>MDEMATTQISKDELDELKEAFAKV</original>
    <variation>ME</variation>
    <location>
        <begin position="1"/>
        <end position="24"/>
    </location>
</feature>
<feature type="splice variant" id="VSP_056237" description="In isoform 2." evidence="11">
    <original>I</original>
    <variation>IKLIDFSNSV</variation>
    <location>
        <position position="296"/>
    </location>
</feature>
<feature type="sequence variant" id="VAR_089124" description="In DIH5; uncertain significance." evidence="10">
    <original>S</original>
    <variation>F</variation>
    <location>
        <position position="120"/>
    </location>
</feature>
<feature type="sequence variant" id="VAR_089125" description="In DIH5; likely pathogenic." evidence="10">
    <original>A</original>
    <variation>V</variation>
    <location>
        <position position="206"/>
    </location>
</feature>
<feature type="sequence variant" id="VAR_089126" description="Found in a patient with X-linked osteogenesis imperfecta; uncertain significance." evidence="9">
    <original>G</original>
    <variation>R</variation>
    <location>
        <position position="229"/>
    </location>
</feature>
<feature type="sequence variant" id="VAR_089127" description="In DIH5; uncertain significance." evidence="10">
    <original>I</original>
    <variation>V</variation>
    <location>
        <position position="235"/>
    </location>
</feature>
<feature type="sequence variant" id="VAR_070278" description="In OSTEOP; uncertain significance; no effect on protein level in patient's fibroblasts." evidence="5">
    <original>A</original>
    <variation>AN</variation>
    <location>
        <position position="253"/>
    </location>
</feature>
<feature type="sequence variant" id="VAR_089128" description="Found in a patient with childhood-onset primary osteoporosis; likely pathogenic." evidence="7">
    <location>
        <begin position="256"/>
        <end position="630"/>
    </location>
</feature>
<feature type="sequence variant" id="VAR_089129" description="In DIH5; likely pathogenic." evidence="10">
    <original>E</original>
    <variation>K</variation>
    <location>
        <position position="270"/>
    </location>
</feature>
<feature type="sequence variant" id="VAR_089130" description="In DIH5; uncertain significance." evidence="10">
    <original>F</original>
    <variation>L</variation>
    <location>
        <position position="352"/>
    </location>
</feature>
<feature type="sequence variant" id="VAR_089131" description="In DIH5; uncertain significance." evidence="10">
    <original>K</original>
    <variation>E</variation>
    <location>
        <position position="364"/>
    </location>
</feature>
<feature type="sequence variant" id="VAR_089132" description="Found in a patient with childhood-onset primary osteoporosis; uncertain significance." evidence="7">
    <original>N</original>
    <variation>S</variation>
    <location>
        <position position="446"/>
    </location>
</feature>
<feature type="sequence variant" id="VAR_089133" description="Found in a patient with childhood-onset primary osteoporosis; uncertain significance." evidence="6">
    <original>L</original>
    <variation>P</variation>
    <location>
        <position position="478"/>
    </location>
</feature>
<feature type="sequence variant" id="VAR_035462" description="In a breast cancer sample; somatic mutation." evidence="4">
    <original>D</original>
    <variation>A</variation>
    <location>
        <position position="488"/>
    </location>
</feature>
<feature type="sequence variant" id="VAR_089134" description="In OSTEOP; uncertain significance." evidence="5">
    <location>
        <begin position="491"/>
        <end position="630"/>
    </location>
</feature>
<feature type="sequence variant" id="VAR_089135" description="In DIH5; likely pathogenic; the orthologous mutation in mice results in death within the first 2 days after birth; the animals display several phenotypes at late gestation and neonatal time points, including diaphragm abnormalities and anterior body-wall defects." evidence="10">
    <original>W</original>
    <variation>C</variation>
    <location>
        <position position="499"/>
    </location>
</feature>
<feature type="sequence variant" id="VAR_089136" description="In DIH5; uncertain significance." evidence="10">
    <original>M</original>
    <variation>V</variation>
    <location>
        <position position="592"/>
    </location>
</feature>
<feature type="helix" evidence="20">
    <location>
        <begin position="123"/>
        <end position="136"/>
    </location>
</feature>
<feature type="turn" evidence="20">
    <location>
        <begin position="137"/>
        <end position="139"/>
    </location>
</feature>
<feature type="turn" evidence="20">
    <location>
        <begin position="144"/>
        <end position="146"/>
    </location>
</feature>
<feature type="turn" evidence="20">
    <location>
        <begin position="151"/>
        <end position="154"/>
    </location>
</feature>
<feature type="helix" evidence="20">
    <location>
        <begin position="155"/>
        <end position="159"/>
    </location>
</feature>
<feature type="helix" evidence="20">
    <location>
        <begin position="160"/>
        <end position="162"/>
    </location>
</feature>
<feature type="helix" evidence="20">
    <location>
        <begin position="164"/>
        <end position="173"/>
    </location>
</feature>
<feature type="helix" evidence="20">
    <location>
        <begin position="180"/>
        <end position="182"/>
    </location>
</feature>
<feature type="helix" evidence="20">
    <location>
        <begin position="190"/>
        <end position="206"/>
    </location>
</feature>
<feature type="helix" evidence="20">
    <location>
        <begin position="216"/>
        <end position="220"/>
    </location>
</feature>
<feature type="helix" evidence="20">
    <location>
        <begin position="224"/>
        <end position="244"/>
    </location>
</feature>
<feature type="helix" evidence="20">
    <location>
        <begin position="261"/>
        <end position="265"/>
    </location>
</feature>
<feature type="helix" evidence="20">
    <location>
        <begin position="269"/>
        <end position="283"/>
    </location>
</feature>
<feature type="turn" evidence="20">
    <location>
        <begin position="294"/>
        <end position="298"/>
    </location>
</feature>
<feature type="helix" evidence="20">
    <location>
        <begin position="300"/>
        <end position="309"/>
    </location>
</feature>
<feature type="strand" evidence="20">
    <location>
        <begin position="315"/>
        <end position="317"/>
    </location>
</feature>
<feature type="turn" evidence="20">
    <location>
        <begin position="326"/>
        <end position="329"/>
    </location>
</feature>
<feature type="helix" evidence="20">
    <location>
        <begin position="333"/>
        <end position="344"/>
    </location>
</feature>
<feature type="turn" evidence="20">
    <location>
        <begin position="345"/>
        <end position="348"/>
    </location>
</feature>
<feature type="helix" evidence="20">
    <location>
        <begin position="355"/>
        <end position="359"/>
    </location>
</feature>
<feature type="helix" evidence="20">
    <location>
        <begin position="363"/>
        <end position="374"/>
    </location>
</feature>
<feature type="helix" evidence="22">
    <location>
        <begin position="398"/>
        <end position="409"/>
    </location>
</feature>
<feature type="helix" evidence="22">
    <location>
        <begin position="419"/>
        <end position="422"/>
    </location>
</feature>
<feature type="helix" evidence="22">
    <location>
        <begin position="427"/>
        <end position="435"/>
    </location>
</feature>
<feature type="helix" evidence="22">
    <location>
        <begin position="442"/>
        <end position="444"/>
    </location>
</feature>
<feature type="strand" evidence="22">
    <location>
        <begin position="452"/>
        <end position="454"/>
    </location>
</feature>
<feature type="helix" evidence="22">
    <location>
        <begin position="455"/>
        <end position="471"/>
    </location>
</feature>
<feature type="turn" evidence="22">
    <location>
        <begin position="472"/>
        <end position="474"/>
    </location>
</feature>
<feature type="helix" evidence="22">
    <location>
        <begin position="483"/>
        <end position="487"/>
    </location>
</feature>
<feature type="helix" evidence="22">
    <location>
        <begin position="491"/>
        <end position="512"/>
    </location>
</feature>
<feature type="strand" evidence="22">
    <location>
        <begin position="513"/>
        <end position="517"/>
    </location>
</feature>
<feature type="helix" evidence="22">
    <location>
        <begin position="525"/>
        <end position="531"/>
    </location>
</feature>
<feature type="turn" evidence="22">
    <location>
        <begin position="532"/>
        <end position="535"/>
    </location>
</feature>
<feature type="helix" evidence="22">
    <location>
        <begin position="547"/>
        <end position="549"/>
    </location>
</feature>
<feature type="helix" evidence="22">
    <location>
        <begin position="553"/>
        <end position="562"/>
    </location>
</feature>
<feature type="turn" evidence="21">
    <location>
        <begin position="569"/>
        <end position="571"/>
    </location>
</feature>
<feature type="turn" evidence="22">
    <location>
        <begin position="579"/>
        <end position="581"/>
    </location>
</feature>
<feature type="helix" evidence="22">
    <location>
        <begin position="582"/>
        <end position="596"/>
    </location>
</feature>
<feature type="helix" evidence="22">
    <location>
        <begin position="605"/>
        <end position="608"/>
    </location>
</feature>
<feature type="helix" evidence="22">
    <location>
        <begin position="612"/>
        <end position="626"/>
    </location>
</feature>
<evidence type="ECO:0000250" key="1">
    <source>
        <dbReference type="UniProtKB" id="Q99K51"/>
    </source>
</evidence>
<evidence type="ECO:0000255" key="2">
    <source>
        <dbReference type="PROSITE-ProRule" id="PRU00044"/>
    </source>
</evidence>
<evidence type="ECO:0000255" key="3">
    <source>
        <dbReference type="PROSITE-ProRule" id="PRU00448"/>
    </source>
</evidence>
<evidence type="ECO:0000269" key="4">
    <source>
    </source>
</evidence>
<evidence type="ECO:0000269" key="5">
    <source>
    </source>
</evidence>
<evidence type="ECO:0000269" key="6">
    <source>
    </source>
</evidence>
<evidence type="ECO:0000269" key="7">
    <source>
    </source>
</evidence>
<evidence type="ECO:0000269" key="8">
    <source>
    </source>
</evidence>
<evidence type="ECO:0000269" key="9">
    <source>
    </source>
</evidence>
<evidence type="ECO:0000269" key="10">
    <source>
    </source>
</evidence>
<evidence type="ECO:0000303" key="11">
    <source>
    </source>
</evidence>
<evidence type="ECO:0000303" key="12">
    <source>
    </source>
</evidence>
<evidence type="ECO:0000303" key="13">
    <source>
    </source>
</evidence>
<evidence type="ECO:0000305" key="14"/>
<evidence type="ECO:0007744" key="15">
    <source>
        <dbReference type="PDB" id="1AOA"/>
    </source>
</evidence>
<evidence type="ECO:0007744" key="16">
    <source>
    </source>
</evidence>
<evidence type="ECO:0007744" key="17">
    <source>
    </source>
</evidence>
<evidence type="ECO:0007744" key="18">
    <source>
    </source>
</evidence>
<evidence type="ECO:0007744" key="19">
    <source>
    </source>
</evidence>
<evidence type="ECO:0007829" key="20">
    <source>
        <dbReference type="PDB" id="1AOA"/>
    </source>
</evidence>
<evidence type="ECO:0007829" key="21">
    <source>
        <dbReference type="PDB" id="1WJO"/>
    </source>
</evidence>
<evidence type="ECO:0007829" key="22">
    <source>
        <dbReference type="PDB" id="7R94"/>
    </source>
</evidence>
<keyword id="KW-0002">3D-structure</keyword>
<keyword id="KW-0009">Actin-binding</keyword>
<keyword id="KW-0025">Alternative splicing</keyword>
<keyword id="KW-0106">Calcium</keyword>
<keyword id="KW-0963">Cytoplasm</keyword>
<keyword id="KW-0903">Direct protein sequencing</keyword>
<keyword id="KW-0225">Disease variant</keyword>
<keyword id="KW-0479">Metal-binding</keyword>
<keyword id="KW-1285">Osteoporosis</keyword>
<keyword id="KW-0597">Phosphoprotein</keyword>
<keyword id="KW-1267">Proteomics identification</keyword>
<keyword id="KW-1185">Reference proteome</keyword>
<keyword id="KW-0677">Repeat</keyword>
<comment type="function">
    <text>Actin-bundling protein.</text>
</comment>
<comment type="subunit">
    <text>Monomer.</text>
</comment>
<comment type="subcellular location">
    <subcellularLocation>
        <location>Cytoplasm</location>
    </subcellularLocation>
</comment>
<comment type="alternative products">
    <event type="alternative splicing"/>
    <isoform>
        <id>P13797-1</id>
        <name>1</name>
        <sequence type="displayed"/>
    </isoform>
    <isoform>
        <id>P13797-2</id>
        <name>2</name>
        <sequence type="described" ref="VSP_056236 VSP_056237"/>
    </isoform>
    <isoform>
        <id>P13797-3</id>
        <name>3</name>
        <sequence type="described" ref="VSP_056235"/>
    </isoform>
</comment>
<comment type="tissue specificity">
    <text>Expressed in a variety of organs, including muscle, brain, uterus and esophagus.</text>
</comment>
<comment type="polymorphism">
    <text evidence="5">Genetic variations in PLS3 define the bone mineral density quantitative trait locus 18 (BMND18) [MIM:300910]. Variance in bone mineral density influences bone mass, contributes to size determination in the general population, and is a susceptibility factor for osteoporotic fractures.</text>
</comment>
<comment type="disease" evidence="5">
    <disease id="DI-02659">
        <name>Osteoporosis</name>
        <acronym>OSTEOP</acronym>
        <description>A systemic skeletal disorder characterized by decreased bone mass and deterioration of bone microarchitecture without alteration in the composition of bone. The result is fragile bones and an increased risk of fractures, even after minimal trauma. Osteoporosis is a chronic condition of multifactorial etiology and is usually clinically silent until a fracture occurs.</description>
        <dbReference type="MIM" id="166710"/>
    </disease>
    <text evidence="12">Disease susceptibility is associated with variants affecting the gene represented in this entry. It has been proposed that loss-of-function variants may be associated with X-linked osteoporosis, while missense variants affecting the actin-binding domains might have a gain-of-function effect and may cause X-linked diaphragmatic hernia.</text>
</comment>
<comment type="disease">
    <text evidence="6 7 8 9">Variants in PLS3 have been suggested to be associated with a variety of abnormalities of the skeletal system, ranging from non-syndromic childhood-onset osteoporosis to osteogenesis imperfecta.</text>
</comment>
<comment type="disease">
    <disease id="DI-06800">
        <name>Diaphragmatic hernia 5, X-linked</name>
        <acronym>DIH5</acronym>
        <description>A form of congenital diaphragmatic hernia, a posterolateral defect of the diaphragm, generally located on the left side, that permits the herniation of abdominal viscera into the thorax. The lungs are hypoplastic and have abnormal vessels that cause respiratory insufficiency and persistent pulmonary hypertension with high mortality. About one third of cases have cardiovascular malformations and lesser proportions have skeletal, neural, genitourinary, gastrointestinal or other defects. DIH5 is usually transmitted in an X-linked recessive pattern with males being severely affected. Early death is frequent.</description>
        <dbReference type="MIM" id="306950"/>
    </disease>
    <text evidence="12">The disease is caused by variants affecting the gene represented in this entry. It has been proposed that loss-of-function variants may be associated with X-linked osteoporosis, while missense variants affecting the actin-binding domains might have a gain-of-function effect and may cause X-linked diaphragmatic hernia.</text>
</comment>
<reference key="1">
    <citation type="journal article" date="1988" name="Mol. Cell. Biol.">
        <title>Molecular cloning and characterization of plastin, a human leukocyte protein expressed in transformed human fibroblasts.</title>
        <authorList>
            <person name="Lin C.-S."/>
            <person name="Aebersold R.H."/>
            <person name="Kent S.B."/>
            <person name="Varma M."/>
            <person name="Leavitt J."/>
        </authorList>
    </citation>
    <scope>NUCLEOTIDE SEQUENCE [MRNA] (ISOFORM 1)</scope>
    <scope>PARTIAL PROTEIN SEQUENCE</scope>
</reference>
<reference key="2">
    <citation type="journal article" date="1990" name="Mol. Cell. Biol.">
        <title>Correction of the N-terminal sequences of the human plastin isoforms by using anchored polymerase chain reaction: identification of a potential calcium-binding domain.</title>
        <authorList>
            <person name="Lin C.-S."/>
            <person name="Aebersold R.H."/>
            <person name="Leavitt J."/>
        </authorList>
    </citation>
    <scope>SEQUENCE REVISION</scope>
</reference>
<reference key="3">
    <citation type="journal article" date="2004" name="Nat. Genet.">
        <title>Complete sequencing and characterization of 21,243 full-length human cDNAs.</title>
        <authorList>
            <person name="Ota T."/>
            <person name="Suzuki Y."/>
            <person name="Nishikawa T."/>
            <person name="Otsuki T."/>
            <person name="Sugiyama T."/>
            <person name="Irie R."/>
            <person name="Wakamatsu A."/>
            <person name="Hayashi K."/>
            <person name="Sato H."/>
            <person name="Nagai K."/>
            <person name="Kimura K."/>
            <person name="Makita H."/>
            <person name="Sekine M."/>
            <person name="Obayashi M."/>
            <person name="Nishi T."/>
            <person name="Shibahara T."/>
            <person name="Tanaka T."/>
            <person name="Ishii S."/>
            <person name="Yamamoto J."/>
            <person name="Saito K."/>
            <person name="Kawai Y."/>
            <person name="Isono Y."/>
            <person name="Nakamura Y."/>
            <person name="Nagahari K."/>
            <person name="Murakami K."/>
            <person name="Yasuda T."/>
            <person name="Iwayanagi T."/>
            <person name="Wagatsuma M."/>
            <person name="Shiratori A."/>
            <person name="Sudo H."/>
            <person name="Hosoiri T."/>
            <person name="Kaku Y."/>
            <person name="Kodaira H."/>
            <person name="Kondo H."/>
            <person name="Sugawara M."/>
            <person name="Takahashi M."/>
            <person name="Kanda K."/>
            <person name="Yokoi T."/>
            <person name="Furuya T."/>
            <person name="Kikkawa E."/>
            <person name="Omura Y."/>
            <person name="Abe K."/>
            <person name="Kamihara K."/>
            <person name="Katsuta N."/>
            <person name="Sato K."/>
            <person name="Tanikawa M."/>
            <person name="Yamazaki M."/>
            <person name="Ninomiya K."/>
            <person name="Ishibashi T."/>
            <person name="Yamashita H."/>
            <person name="Murakawa K."/>
            <person name="Fujimori K."/>
            <person name="Tanai H."/>
            <person name="Kimata M."/>
            <person name="Watanabe M."/>
            <person name="Hiraoka S."/>
            <person name="Chiba Y."/>
            <person name="Ishida S."/>
            <person name="Ono Y."/>
            <person name="Takiguchi S."/>
            <person name="Watanabe S."/>
            <person name="Yosida M."/>
            <person name="Hotuta T."/>
            <person name="Kusano J."/>
            <person name="Kanehori K."/>
            <person name="Takahashi-Fujii A."/>
            <person name="Hara H."/>
            <person name="Tanase T.-O."/>
            <person name="Nomura Y."/>
            <person name="Togiya S."/>
            <person name="Komai F."/>
            <person name="Hara R."/>
            <person name="Takeuchi K."/>
            <person name="Arita M."/>
            <person name="Imose N."/>
            <person name="Musashino K."/>
            <person name="Yuuki H."/>
            <person name="Oshima A."/>
            <person name="Sasaki N."/>
            <person name="Aotsuka S."/>
            <person name="Yoshikawa Y."/>
            <person name="Matsunawa H."/>
            <person name="Ichihara T."/>
            <person name="Shiohata N."/>
            <person name="Sano S."/>
            <person name="Moriya S."/>
            <person name="Momiyama H."/>
            <person name="Satoh N."/>
            <person name="Takami S."/>
            <person name="Terashima Y."/>
            <person name="Suzuki O."/>
            <person name="Nakagawa S."/>
            <person name="Senoh A."/>
            <person name="Mizoguchi H."/>
            <person name="Goto Y."/>
            <person name="Shimizu F."/>
            <person name="Wakebe H."/>
            <person name="Hishigaki H."/>
            <person name="Watanabe T."/>
            <person name="Sugiyama A."/>
            <person name="Takemoto M."/>
            <person name="Kawakami B."/>
            <person name="Yamazaki M."/>
            <person name="Watanabe K."/>
            <person name="Kumagai A."/>
            <person name="Itakura S."/>
            <person name="Fukuzumi Y."/>
            <person name="Fujimori Y."/>
            <person name="Komiyama M."/>
            <person name="Tashiro H."/>
            <person name="Tanigami A."/>
            <person name="Fujiwara T."/>
            <person name="Ono T."/>
            <person name="Yamada K."/>
            <person name="Fujii Y."/>
            <person name="Ozaki K."/>
            <person name="Hirao M."/>
            <person name="Ohmori Y."/>
            <person name="Kawabata A."/>
            <person name="Hikiji T."/>
            <person name="Kobatake N."/>
            <person name="Inagaki H."/>
            <person name="Ikema Y."/>
            <person name="Okamoto S."/>
            <person name="Okitani R."/>
            <person name="Kawakami T."/>
            <person name="Noguchi S."/>
            <person name="Itoh T."/>
            <person name="Shigeta K."/>
            <person name="Senba T."/>
            <person name="Matsumura K."/>
            <person name="Nakajima Y."/>
            <person name="Mizuno T."/>
            <person name="Morinaga M."/>
            <person name="Sasaki M."/>
            <person name="Togashi T."/>
            <person name="Oyama M."/>
            <person name="Hata H."/>
            <person name="Watanabe M."/>
            <person name="Komatsu T."/>
            <person name="Mizushima-Sugano J."/>
            <person name="Satoh T."/>
            <person name="Shirai Y."/>
            <person name="Takahashi Y."/>
            <person name="Nakagawa K."/>
            <person name="Okumura K."/>
            <person name="Nagase T."/>
            <person name="Nomura N."/>
            <person name="Kikuchi H."/>
            <person name="Masuho Y."/>
            <person name="Yamashita R."/>
            <person name="Nakai K."/>
            <person name="Yada T."/>
            <person name="Nakamura Y."/>
            <person name="Ohara O."/>
            <person name="Isogai T."/>
            <person name="Sugano S."/>
        </authorList>
    </citation>
    <scope>NUCLEOTIDE SEQUENCE [LARGE SCALE MRNA] (ISOFORMS 1 AND 2)</scope>
    <source>
        <tissue>Amygdala</tissue>
    </source>
</reference>
<reference key="4">
    <citation type="journal article" date="2005" name="Nature">
        <title>The DNA sequence of the human X chromosome.</title>
        <authorList>
            <person name="Ross M.T."/>
            <person name="Grafham D.V."/>
            <person name="Coffey A.J."/>
            <person name="Scherer S."/>
            <person name="McLay K."/>
            <person name="Muzny D."/>
            <person name="Platzer M."/>
            <person name="Howell G.R."/>
            <person name="Burrows C."/>
            <person name="Bird C.P."/>
            <person name="Frankish A."/>
            <person name="Lovell F.L."/>
            <person name="Howe K.L."/>
            <person name="Ashurst J.L."/>
            <person name="Fulton R.S."/>
            <person name="Sudbrak R."/>
            <person name="Wen G."/>
            <person name="Jones M.C."/>
            <person name="Hurles M.E."/>
            <person name="Andrews T.D."/>
            <person name="Scott C.E."/>
            <person name="Searle S."/>
            <person name="Ramser J."/>
            <person name="Whittaker A."/>
            <person name="Deadman R."/>
            <person name="Carter N.P."/>
            <person name="Hunt S.E."/>
            <person name="Chen R."/>
            <person name="Cree A."/>
            <person name="Gunaratne P."/>
            <person name="Havlak P."/>
            <person name="Hodgson A."/>
            <person name="Metzker M.L."/>
            <person name="Richards S."/>
            <person name="Scott G."/>
            <person name="Steffen D."/>
            <person name="Sodergren E."/>
            <person name="Wheeler D.A."/>
            <person name="Worley K.C."/>
            <person name="Ainscough R."/>
            <person name="Ambrose K.D."/>
            <person name="Ansari-Lari M.A."/>
            <person name="Aradhya S."/>
            <person name="Ashwell R.I."/>
            <person name="Babbage A.K."/>
            <person name="Bagguley C.L."/>
            <person name="Ballabio A."/>
            <person name="Banerjee R."/>
            <person name="Barker G.E."/>
            <person name="Barlow K.F."/>
            <person name="Barrett I.P."/>
            <person name="Bates K.N."/>
            <person name="Beare D.M."/>
            <person name="Beasley H."/>
            <person name="Beasley O."/>
            <person name="Beck A."/>
            <person name="Bethel G."/>
            <person name="Blechschmidt K."/>
            <person name="Brady N."/>
            <person name="Bray-Allen S."/>
            <person name="Bridgeman A.M."/>
            <person name="Brown A.J."/>
            <person name="Brown M.J."/>
            <person name="Bonnin D."/>
            <person name="Bruford E.A."/>
            <person name="Buhay C."/>
            <person name="Burch P."/>
            <person name="Burford D."/>
            <person name="Burgess J."/>
            <person name="Burrill W."/>
            <person name="Burton J."/>
            <person name="Bye J.M."/>
            <person name="Carder C."/>
            <person name="Carrel L."/>
            <person name="Chako J."/>
            <person name="Chapman J.C."/>
            <person name="Chavez D."/>
            <person name="Chen E."/>
            <person name="Chen G."/>
            <person name="Chen Y."/>
            <person name="Chen Z."/>
            <person name="Chinault C."/>
            <person name="Ciccodicola A."/>
            <person name="Clark S.Y."/>
            <person name="Clarke G."/>
            <person name="Clee C.M."/>
            <person name="Clegg S."/>
            <person name="Clerc-Blankenburg K."/>
            <person name="Clifford K."/>
            <person name="Cobley V."/>
            <person name="Cole C.G."/>
            <person name="Conquer J.S."/>
            <person name="Corby N."/>
            <person name="Connor R.E."/>
            <person name="David R."/>
            <person name="Davies J."/>
            <person name="Davis C."/>
            <person name="Davis J."/>
            <person name="Delgado O."/>
            <person name="Deshazo D."/>
            <person name="Dhami P."/>
            <person name="Ding Y."/>
            <person name="Dinh H."/>
            <person name="Dodsworth S."/>
            <person name="Draper H."/>
            <person name="Dugan-Rocha S."/>
            <person name="Dunham A."/>
            <person name="Dunn M."/>
            <person name="Durbin K.J."/>
            <person name="Dutta I."/>
            <person name="Eades T."/>
            <person name="Ellwood M."/>
            <person name="Emery-Cohen A."/>
            <person name="Errington H."/>
            <person name="Evans K.L."/>
            <person name="Faulkner L."/>
            <person name="Francis F."/>
            <person name="Frankland J."/>
            <person name="Fraser A.E."/>
            <person name="Galgoczy P."/>
            <person name="Gilbert J."/>
            <person name="Gill R."/>
            <person name="Gloeckner G."/>
            <person name="Gregory S.G."/>
            <person name="Gribble S."/>
            <person name="Griffiths C."/>
            <person name="Grocock R."/>
            <person name="Gu Y."/>
            <person name="Gwilliam R."/>
            <person name="Hamilton C."/>
            <person name="Hart E.A."/>
            <person name="Hawes A."/>
            <person name="Heath P.D."/>
            <person name="Heitmann K."/>
            <person name="Hennig S."/>
            <person name="Hernandez J."/>
            <person name="Hinzmann B."/>
            <person name="Ho S."/>
            <person name="Hoffs M."/>
            <person name="Howden P.J."/>
            <person name="Huckle E.J."/>
            <person name="Hume J."/>
            <person name="Hunt P.J."/>
            <person name="Hunt A.R."/>
            <person name="Isherwood J."/>
            <person name="Jacob L."/>
            <person name="Johnson D."/>
            <person name="Jones S."/>
            <person name="de Jong P.J."/>
            <person name="Joseph S.S."/>
            <person name="Keenan S."/>
            <person name="Kelly S."/>
            <person name="Kershaw J.K."/>
            <person name="Khan Z."/>
            <person name="Kioschis P."/>
            <person name="Klages S."/>
            <person name="Knights A.J."/>
            <person name="Kosiura A."/>
            <person name="Kovar-Smith C."/>
            <person name="Laird G.K."/>
            <person name="Langford C."/>
            <person name="Lawlor S."/>
            <person name="Leversha M."/>
            <person name="Lewis L."/>
            <person name="Liu W."/>
            <person name="Lloyd C."/>
            <person name="Lloyd D.M."/>
            <person name="Loulseged H."/>
            <person name="Loveland J.E."/>
            <person name="Lovell J.D."/>
            <person name="Lozado R."/>
            <person name="Lu J."/>
            <person name="Lyne R."/>
            <person name="Ma J."/>
            <person name="Maheshwari M."/>
            <person name="Matthews L.H."/>
            <person name="McDowall J."/>
            <person name="McLaren S."/>
            <person name="McMurray A."/>
            <person name="Meidl P."/>
            <person name="Meitinger T."/>
            <person name="Milne S."/>
            <person name="Miner G."/>
            <person name="Mistry S.L."/>
            <person name="Morgan M."/>
            <person name="Morris S."/>
            <person name="Mueller I."/>
            <person name="Mullikin J.C."/>
            <person name="Nguyen N."/>
            <person name="Nordsiek G."/>
            <person name="Nyakatura G."/>
            <person name="O'dell C.N."/>
            <person name="Okwuonu G."/>
            <person name="Palmer S."/>
            <person name="Pandian R."/>
            <person name="Parker D."/>
            <person name="Parrish J."/>
            <person name="Pasternak S."/>
            <person name="Patel D."/>
            <person name="Pearce A.V."/>
            <person name="Pearson D.M."/>
            <person name="Pelan S.E."/>
            <person name="Perez L."/>
            <person name="Porter K.M."/>
            <person name="Ramsey Y."/>
            <person name="Reichwald K."/>
            <person name="Rhodes S."/>
            <person name="Ridler K.A."/>
            <person name="Schlessinger D."/>
            <person name="Schueler M.G."/>
            <person name="Sehra H.K."/>
            <person name="Shaw-Smith C."/>
            <person name="Shen H."/>
            <person name="Sheridan E.M."/>
            <person name="Shownkeen R."/>
            <person name="Skuce C.D."/>
            <person name="Smith M.L."/>
            <person name="Sotheran E.C."/>
            <person name="Steingruber H.E."/>
            <person name="Steward C.A."/>
            <person name="Storey R."/>
            <person name="Swann R.M."/>
            <person name="Swarbreck D."/>
            <person name="Tabor P.E."/>
            <person name="Taudien S."/>
            <person name="Taylor T."/>
            <person name="Teague B."/>
            <person name="Thomas K."/>
            <person name="Thorpe A."/>
            <person name="Timms K."/>
            <person name="Tracey A."/>
            <person name="Trevanion S."/>
            <person name="Tromans A.C."/>
            <person name="d'Urso M."/>
            <person name="Verduzco D."/>
            <person name="Villasana D."/>
            <person name="Waldron L."/>
            <person name="Wall M."/>
            <person name="Wang Q."/>
            <person name="Warren J."/>
            <person name="Warry G.L."/>
            <person name="Wei X."/>
            <person name="West A."/>
            <person name="Whitehead S.L."/>
            <person name="Whiteley M.N."/>
            <person name="Wilkinson J.E."/>
            <person name="Willey D.L."/>
            <person name="Williams G."/>
            <person name="Williams L."/>
            <person name="Williamson A."/>
            <person name="Williamson H."/>
            <person name="Wilming L."/>
            <person name="Woodmansey R.L."/>
            <person name="Wray P.W."/>
            <person name="Yen J."/>
            <person name="Zhang J."/>
            <person name="Zhou J."/>
            <person name="Zoghbi H."/>
            <person name="Zorilla S."/>
            <person name="Buck D."/>
            <person name="Reinhardt R."/>
            <person name="Poustka A."/>
            <person name="Rosenthal A."/>
            <person name="Lehrach H."/>
            <person name="Meindl A."/>
            <person name="Minx P.J."/>
            <person name="Hillier L.W."/>
            <person name="Willard H.F."/>
            <person name="Wilson R.K."/>
            <person name="Waterston R.H."/>
            <person name="Rice C.M."/>
            <person name="Vaudin M."/>
            <person name="Coulson A."/>
            <person name="Nelson D.L."/>
            <person name="Weinstock G."/>
            <person name="Sulston J.E."/>
            <person name="Durbin R.M."/>
            <person name="Hubbard T."/>
            <person name="Gibbs R.A."/>
            <person name="Beck S."/>
            <person name="Rogers J."/>
            <person name="Bentley D.R."/>
        </authorList>
    </citation>
    <scope>NUCLEOTIDE SEQUENCE [LARGE SCALE GENOMIC DNA]</scope>
</reference>
<reference key="5">
    <citation type="submission" date="2005-09" db="EMBL/GenBank/DDBJ databases">
        <authorList>
            <person name="Mural R.J."/>
            <person name="Istrail S."/>
            <person name="Sutton G."/>
            <person name="Florea L."/>
            <person name="Halpern A.L."/>
            <person name="Mobarry C.M."/>
            <person name="Lippert R."/>
            <person name="Walenz B."/>
            <person name="Shatkay H."/>
            <person name="Dew I."/>
            <person name="Miller J.R."/>
            <person name="Flanigan M.J."/>
            <person name="Edwards N.J."/>
            <person name="Bolanos R."/>
            <person name="Fasulo D."/>
            <person name="Halldorsson B.V."/>
            <person name="Hannenhalli S."/>
            <person name="Turner R."/>
            <person name="Yooseph S."/>
            <person name="Lu F."/>
            <person name="Nusskern D.R."/>
            <person name="Shue B.C."/>
            <person name="Zheng X.H."/>
            <person name="Zhong F."/>
            <person name="Delcher A.L."/>
            <person name="Huson D.H."/>
            <person name="Kravitz S.A."/>
            <person name="Mouchard L."/>
            <person name="Reinert K."/>
            <person name="Remington K.A."/>
            <person name="Clark A.G."/>
            <person name="Waterman M.S."/>
            <person name="Eichler E.E."/>
            <person name="Adams M.D."/>
            <person name="Hunkapiller M.W."/>
            <person name="Myers E.W."/>
            <person name="Venter J.C."/>
        </authorList>
    </citation>
    <scope>NUCLEOTIDE SEQUENCE [LARGE SCALE GENOMIC DNA]</scope>
</reference>
<reference key="6">
    <citation type="journal article" date="2004" name="Genome Res.">
        <title>The status, quality, and expansion of the NIH full-length cDNA project: the Mammalian Gene Collection (MGC).</title>
        <authorList>
            <consortium name="The MGC Project Team"/>
        </authorList>
    </citation>
    <scope>NUCLEOTIDE SEQUENCE [LARGE SCALE MRNA] (ISOFORM 1)</scope>
    <source>
        <tissue>Placenta</tissue>
        <tissue>Skin</tissue>
    </source>
</reference>
<reference key="7">
    <citation type="journal article" date="1993" name="J. Biol. Chem.">
        <title>Human plastin genes. Comparative gene structure, chromosome location, and differential expression in normal and neoplastic cells.</title>
        <authorList>
            <person name="Lin C.-S."/>
            <person name="Park T."/>
            <person name="Chen Z.P."/>
            <person name="Leavitt J."/>
        </authorList>
    </citation>
    <scope>NUCLEOTIDE SEQUENCE [GENOMIC DNA] OF 588-630</scope>
</reference>
<reference key="8">
    <citation type="journal article" date="2008" name="Proc. Natl. Acad. Sci. U.S.A.">
        <title>A quantitative atlas of mitotic phosphorylation.</title>
        <authorList>
            <person name="Dephoure N."/>
            <person name="Zhou C."/>
            <person name="Villen J."/>
            <person name="Beausoleil S.A."/>
            <person name="Bakalarski C.E."/>
            <person name="Elledge S.J."/>
            <person name="Gygi S.P."/>
        </authorList>
    </citation>
    <scope>PHOSPHORYLATION [LARGE SCALE ANALYSIS] AT SER-326 AND THR-391</scope>
    <scope>IDENTIFICATION BY MASS SPECTROMETRY [LARGE SCALE ANALYSIS]</scope>
    <source>
        <tissue>Cervix carcinoma</tissue>
    </source>
</reference>
<reference key="9">
    <citation type="journal article" date="2010" name="Sci. Signal.">
        <title>Quantitative phosphoproteomics reveals widespread full phosphorylation site occupancy during mitosis.</title>
        <authorList>
            <person name="Olsen J.V."/>
            <person name="Vermeulen M."/>
            <person name="Santamaria A."/>
            <person name="Kumar C."/>
            <person name="Miller M.L."/>
            <person name="Jensen L.J."/>
            <person name="Gnad F."/>
            <person name="Cox J."/>
            <person name="Jensen T.S."/>
            <person name="Nigg E.A."/>
            <person name="Brunak S."/>
            <person name="Mann M."/>
        </authorList>
    </citation>
    <scope>PHOSPHORYLATION [LARGE SCALE ANALYSIS] AT SER-293; SER-326 AND THR-391</scope>
    <scope>IDENTIFICATION BY MASS SPECTROMETRY [LARGE SCALE ANALYSIS]</scope>
    <source>
        <tissue>Cervix carcinoma</tissue>
    </source>
</reference>
<reference key="10">
    <citation type="journal article" date="2011" name="BMC Syst. Biol.">
        <title>Initial characterization of the human central proteome.</title>
        <authorList>
            <person name="Burkard T.R."/>
            <person name="Planyavsky M."/>
            <person name="Kaupe I."/>
            <person name="Breitwieser F.P."/>
            <person name="Buerckstuemmer T."/>
            <person name="Bennett K.L."/>
            <person name="Superti-Furga G."/>
            <person name="Colinge J."/>
        </authorList>
    </citation>
    <scope>IDENTIFICATION BY MASS SPECTROMETRY [LARGE SCALE ANALYSIS]</scope>
</reference>
<reference key="11">
    <citation type="journal article" date="2013" name="J. Proteome Res.">
        <title>Toward a comprehensive characterization of a human cancer cell phosphoproteome.</title>
        <authorList>
            <person name="Zhou H."/>
            <person name="Di Palma S."/>
            <person name="Preisinger C."/>
            <person name="Peng M."/>
            <person name="Polat A.N."/>
            <person name="Heck A.J."/>
            <person name="Mohammed S."/>
        </authorList>
    </citation>
    <scope>PHOSPHORYLATION [LARGE SCALE ANALYSIS] AT SER-293 AND SER-326</scope>
    <scope>IDENTIFICATION BY MASS SPECTROMETRY [LARGE SCALE ANALYSIS]</scope>
    <source>
        <tissue>Cervix carcinoma</tissue>
    </source>
</reference>
<reference key="12">
    <citation type="journal article" date="2013" name="N. Engl. J. Med.">
        <title>PLS3 mutations in X-linked osteoporosis with fractures.</title>
        <authorList>
            <person name="van Dijk F.S."/>
            <person name="Zillikens M.C."/>
            <person name="Micha D."/>
            <person name="Riessland M."/>
            <person name="Marcelis C.L."/>
            <person name="de Die-Smulders C.E."/>
            <person name="Milbradt J."/>
            <person name="Franken A.A."/>
            <person name="Harsevoort A.J."/>
            <person name="Lichtenbelt K.D."/>
            <person name="Pruijs H.E."/>
            <person name="Rubio-Gozalbo M.E."/>
            <person name="Zwertbroek R."/>
            <person name="Moutaouakil Y."/>
            <person name="Egthuijsen J."/>
            <person name="Hammerschmidt M."/>
            <person name="Bijman R."/>
            <person name="Semeins C.M."/>
            <person name="Bakker A.D."/>
            <person name="Everts V."/>
            <person name="Klein-Nulend J."/>
            <person name="Campos-Obando N."/>
            <person name="Hofman A."/>
            <person name="te Meerman G.J."/>
            <person name="Verkerk A.J."/>
            <person name="Uitterlinden A.G."/>
            <person name="Maugeri A."/>
            <person name="Sistermans E.A."/>
            <person name="Waisfisz Q."/>
            <person name="Meijers-Heijboer H."/>
            <person name="Wirth B."/>
            <person name="Simon M.E."/>
            <person name="Pals G."/>
        </authorList>
    </citation>
    <scope>INVOLVEMENT IN OSTEOP</scope>
    <scope>POLYMORPHISM</scope>
    <scope>VARIANTS OSTEOP ASN-253 INS AND 491-GLN--VAL-630 DEL</scope>
</reference>
<reference key="13">
    <citation type="journal article" date="2014" name="J. Proteomics">
        <title>An enzyme assisted RP-RPLC approach for in-depth analysis of human liver phosphoproteome.</title>
        <authorList>
            <person name="Bian Y."/>
            <person name="Song C."/>
            <person name="Cheng K."/>
            <person name="Dong M."/>
            <person name="Wang F."/>
            <person name="Huang J."/>
            <person name="Sun D."/>
            <person name="Wang L."/>
            <person name="Ye M."/>
            <person name="Zou H."/>
        </authorList>
    </citation>
    <scope>PHOSPHORYLATION [LARGE SCALE ANALYSIS] AT SER-339</scope>
    <scope>IDENTIFICATION BY MASS SPECTROMETRY [LARGE SCALE ANALYSIS]</scope>
    <source>
        <tissue>Liver</tissue>
    </source>
</reference>
<reference evidence="15" key="14">
    <citation type="journal article" date="1997" name="Nat. Struct. Biol.">
        <title>The structure of an actin-crosslinking domain from human fimbrin.</title>
        <authorList>
            <person name="Goldsmith S.C."/>
            <person name="Pokala N."/>
            <person name="Shen W."/>
            <person name="Fedorov A.A."/>
            <person name="Matsudaira P."/>
            <person name="Almo S.C."/>
        </authorList>
    </citation>
    <scope>X-RAY CRYSTALLOGRAPHY (2.4 ANGSTROMS) OF 101-375</scope>
</reference>
<reference key="15">
    <citation type="submission" date="2004-11" db="PDB data bank">
        <title>Solution structure of the fourth CH domain from human plastin 3 T-isoform.</title>
        <authorList>
            <consortium name="RIKEN structural genomics initiative (RSGI)"/>
        </authorList>
    </citation>
    <scope>STRUCTURE BY NMR OF 520-630</scope>
</reference>
<reference key="16">
    <citation type="journal article" date="2006" name="Science">
        <title>The consensus coding sequences of human breast and colorectal cancers.</title>
        <authorList>
            <person name="Sjoeblom T."/>
            <person name="Jones S."/>
            <person name="Wood L.D."/>
            <person name="Parsons D.W."/>
            <person name="Lin J."/>
            <person name="Barber T.D."/>
            <person name="Mandelker D."/>
            <person name="Leary R.J."/>
            <person name="Ptak J."/>
            <person name="Silliman N."/>
            <person name="Szabo S."/>
            <person name="Buckhaults P."/>
            <person name="Farrell C."/>
            <person name="Meeh P."/>
            <person name="Markowitz S.D."/>
            <person name="Willis J."/>
            <person name="Dawson D."/>
            <person name="Willson J.K.V."/>
            <person name="Gazdar A.F."/>
            <person name="Hartigan J."/>
            <person name="Wu L."/>
            <person name="Liu C."/>
            <person name="Parmigiani G."/>
            <person name="Park B.H."/>
            <person name="Bachman K.E."/>
            <person name="Papadopoulos N."/>
            <person name="Vogelstein B."/>
            <person name="Kinzler K.W."/>
            <person name="Velculescu V.E."/>
        </authorList>
    </citation>
    <scope>VARIANT [LARGE SCALE ANALYSIS] ALA-488</scope>
</reference>
<reference key="17">
    <citation type="journal article" date="2014" name="J. Bone Miner. Res.">
        <title>Osteoporosis caused by mutations in PLS3: clinical and bone tissue characteristics.</title>
        <authorList>
            <person name="Fahiminiya S."/>
            <person name="Majewski J."/>
            <person name="Al-Jallad H."/>
            <person name="Moffatt P."/>
            <person name="Mort J."/>
            <person name="Glorieux F.H."/>
            <person name="Roschger P."/>
            <person name="Klaushofer K."/>
            <person name="Rauch F."/>
        </authorList>
    </citation>
    <scope>INVOLVEMENT IN CHILDHOOD-ONSET PRIMARY OSTEOPOROSIS</scope>
    <scope>VARIANT PRO-478</scope>
</reference>
<reference key="18">
    <citation type="journal article" date="2017" name="Osteoporos. Int.">
        <title>PLS3 sequencing in childhood-onset primary osteoporosis identifies two novel disease-causing variants.</title>
        <authorList>
            <person name="Kaempe A.J."/>
            <person name="Costantini A."/>
            <person name="Maekitie R.E."/>
            <person name="Jaentti N."/>
            <person name="Valta H."/>
            <person name="Maeyraenpaeae M."/>
            <person name="Kroeger H."/>
            <person name="Pekkinen M."/>
            <person name="Taylan F."/>
            <person name="Jiao H."/>
            <person name="Maekitie O."/>
        </authorList>
    </citation>
    <scope>INVOLVEMENT IN CHILDHOOD-ONSET PRIMARY OSTEOPOROSIS</scope>
    <scope>VARIANTS 256-ARG--VAL-630 DEL AND SER-446</scope>
</reference>
<reference key="19">
    <citation type="journal article" date="2020" name="Mol. Genet. Genomic Med.">
        <title>A novel mutation in PLS3 causes extremely rare X-linked osteogenesis imperfecta.</title>
        <authorList>
            <person name="Hu J."/>
            <person name="Li L.J."/>
            <person name="Zheng W.B."/>
            <person name="Zhao D.C."/>
            <person name="Wang O."/>
            <person name="Jiang Y."/>
            <person name="Xing X.P."/>
            <person name="Li M."/>
            <person name="Xia W."/>
        </authorList>
    </citation>
    <scope>INVOLVEMENT IN X-LINKED OSTEOGENESIS IMPERFECTA</scope>
</reference>
<reference key="20">
    <citation type="journal article" date="2021" name="Genes (Basel)">
        <title>X-Linked Osteogenesis Imperfecta Possibly Caused by a Novel Variant in PLS3.</title>
        <authorList>
            <person name="Brlek P."/>
            <person name="Anticevic D."/>
            <person name="Molnar V."/>
            <person name="Matisic V."/>
            <person name="Robinson K."/>
            <person name="Aradhya S."/>
            <person name="Krpan D."/>
            <person name="Primorac D."/>
        </authorList>
    </citation>
    <scope>INVOLVEMENT IN X-LINKED OSTEOGENESIS IMPERFECTA</scope>
    <scope>VARIANT ARG-229</scope>
</reference>
<reference key="21">
    <citation type="journal article" date="2023" name="Am. J. Hum. Genet.">
        <title>PLS3 missense variants affecting the actin-binding domains cause X-linked congenital diaphragmatic hernia and body-wall defects.</title>
        <authorList>
            <person name="Petit F."/>
            <person name="Longoni M."/>
            <person name="Wells J."/>
            <person name="Maser R.S."/>
            <person name="Bogenschutz E.L."/>
            <person name="Dysart M.J."/>
            <person name="Contreras H.T.M."/>
            <person name="Frenois F."/>
            <person name="Pober B.R."/>
            <person name="Clark R.D."/>
            <person name="Giampietro P.F."/>
            <person name="Ropers H.H."/>
            <person name="Hu H."/>
            <person name="Loscertales M."/>
            <person name="Wagner R."/>
            <person name="Ai X."/>
            <person name="Brand H."/>
            <person name="Jourdain A.S."/>
            <person name="Delrue M.A."/>
            <person name="Gilbert-Dussardier B."/>
            <person name="Devisme L."/>
            <person name="Keren B."/>
            <person name="McCulley D.J."/>
            <person name="Qiao L."/>
            <person name="Hernan R."/>
            <person name="Wynn J."/>
            <person name="Scott T.M."/>
            <person name="Calame D.G."/>
            <person name="Coban-Akdemir Z."/>
            <person name="Hernandez P."/>
            <person name="Hernandez-Garcia A."/>
            <person name="Yonath H."/>
            <person name="Lupski J.R."/>
            <person name="Shen Y."/>
            <person name="Chung W.K."/>
            <person name="Scott D.A."/>
            <person name="Bult C.J."/>
            <person name="Donahoe P.K."/>
            <person name="High F.A."/>
        </authorList>
    </citation>
    <scope>INVOLVEMENT IN DIH5</scope>
    <scope>VARIANTS DIH5 PHE-120; VAL-206; VAL-235; LYS-270; LEU-352; GLU-364; CYS-499 AND VAL-592</scope>
</reference>
<proteinExistence type="evidence at protein level"/>
<organism>
    <name type="scientific">Homo sapiens</name>
    <name type="common">Human</name>
    <dbReference type="NCBI Taxonomy" id="9606"/>
    <lineage>
        <taxon>Eukaryota</taxon>
        <taxon>Metazoa</taxon>
        <taxon>Chordata</taxon>
        <taxon>Craniata</taxon>
        <taxon>Vertebrata</taxon>
        <taxon>Euteleostomi</taxon>
        <taxon>Mammalia</taxon>
        <taxon>Eutheria</taxon>
        <taxon>Euarchontoglires</taxon>
        <taxon>Primates</taxon>
        <taxon>Haplorrhini</taxon>
        <taxon>Catarrhini</taxon>
        <taxon>Hominidae</taxon>
        <taxon>Homo</taxon>
    </lineage>
</organism>
<accession>P13797</accession>
<accession>A8K579</accession>
<accession>B1AQ09</accession>
<accession>B4DGB4</accession>
<accession>B7Z6M1</accession>
<accession>Q86YI6</accession>
<dbReference type="EMBL" id="M22299">
    <property type="protein sequence ID" value="AAB02844.1"/>
    <property type="molecule type" value="mRNA"/>
</dbReference>
<dbReference type="EMBL" id="M34427">
    <property type="protein sequence ID" value="AAA36759.1"/>
    <property type="molecule type" value="mRNA"/>
</dbReference>
<dbReference type="EMBL" id="AK291194">
    <property type="protein sequence ID" value="BAF83883.1"/>
    <property type="molecule type" value="mRNA"/>
</dbReference>
<dbReference type="EMBL" id="AK294509">
    <property type="protein sequence ID" value="BAG57725.1"/>
    <property type="molecule type" value="mRNA"/>
</dbReference>
<dbReference type="EMBL" id="AK300575">
    <property type="protein sequence ID" value="BAH13307.1"/>
    <property type="molecule type" value="mRNA"/>
</dbReference>
<dbReference type="EMBL" id="AK312391">
    <property type="protein sequence ID" value="BAG35308.1"/>
    <property type="molecule type" value="mRNA"/>
</dbReference>
<dbReference type="EMBL" id="AC003983">
    <property type="status" value="NOT_ANNOTATED_CDS"/>
    <property type="molecule type" value="Genomic_DNA"/>
</dbReference>
<dbReference type="EMBL" id="AC005000">
    <property type="status" value="NOT_ANNOTATED_CDS"/>
    <property type="molecule type" value="Genomic_DNA"/>
</dbReference>
<dbReference type="EMBL" id="AL589842">
    <property type="status" value="NOT_ANNOTATED_CDS"/>
    <property type="molecule type" value="Genomic_DNA"/>
</dbReference>
<dbReference type="EMBL" id="CH471120">
    <property type="protein sequence ID" value="EAX02614.1"/>
    <property type="molecule type" value="Genomic_DNA"/>
</dbReference>
<dbReference type="EMBL" id="BC039049">
    <property type="protein sequence ID" value="AAH39049.1"/>
    <property type="molecule type" value="mRNA"/>
</dbReference>
<dbReference type="EMBL" id="BC056898">
    <property type="protein sequence ID" value="AAH56898.1"/>
    <property type="molecule type" value="mRNA"/>
</dbReference>
<dbReference type="EMBL" id="L05491">
    <property type="protein sequence ID" value="AAA61214.1"/>
    <property type="molecule type" value="Genomic_DNA"/>
</dbReference>
<dbReference type="CCDS" id="CCDS14568.1">
    <molecule id="P13797-1"/>
</dbReference>
<dbReference type="CCDS" id="CCDS78499.1">
    <molecule id="P13797-2"/>
</dbReference>
<dbReference type="PIR" id="A34789">
    <property type="entry name" value="A34789"/>
</dbReference>
<dbReference type="RefSeq" id="NP_001129497.1">
    <molecule id="P13797-1"/>
    <property type="nucleotide sequence ID" value="NM_001136025.5"/>
</dbReference>
<dbReference type="RefSeq" id="NP_001165806.1">
    <property type="nucleotide sequence ID" value="NM_001172335.2"/>
</dbReference>
<dbReference type="RefSeq" id="NP_001269266.1">
    <molecule id="P13797-2"/>
    <property type="nucleotide sequence ID" value="NM_001282337.2"/>
</dbReference>
<dbReference type="RefSeq" id="NP_001269267.1">
    <molecule id="P13797-3"/>
    <property type="nucleotide sequence ID" value="NM_001282338.2"/>
</dbReference>
<dbReference type="RefSeq" id="NP_005023.2">
    <molecule id="P13797-1"/>
    <property type="nucleotide sequence ID" value="NM_005032.6"/>
</dbReference>
<dbReference type="RefSeq" id="XP_011535836.1">
    <property type="nucleotide sequence ID" value="XM_011537534.1"/>
</dbReference>
<dbReference type="RefSeq" id="XP_047298123.1">
    <molecule id="P13797-1"/>
    <property type="nucleotide sequence ID" value="XM_047442167.1"/>
</dbReference>
<dbReference type="RefSeq" id="XP_047298124.1">
    <molecule id="P13797-1"/>
    <property type="nucleotide sequence ID" value="XM_047442168.1"/>
</dbReference>
<dbReference type="RefSeq" id="XP_047298125.1">
    <molecule id="P13797-1"/>
    <property type="nucleotide sequence ID" value="XM_047442169.1"/>
</dbReference>
<dbReference type="RefSeq" id="XP_047298126.1">
    <molecule id="P13797-1"/>
    <property type="nucleotide sequence ID" value="XM_047442170.1"/>
</dbReference>
<dbReference type="RefSeq" id="XP_047298127.1">
    <molecule id="P13797-1"/>
    <property type="nucleotide sequence ID" value="XM_047442171.1"/>
</dbReference>
<dbReference type="RefSeq" id="XP_047298128.1">
    <molecule id="P13797-1"/>
    <property type="nucleotide sequence ID" value="XM_047442172.1"/>
</dbReference>
<dbReference type="RefSeq" id="XP_054183189.1">
    <molecule id="P13797-1"/>
    <property type="nucleotide sequence ID" value="XM_054327214.1"/>
</dbReference>
<dbReference type="RefSeq" id="XP_054183190.1">
    <molecule id="P13797-1"/>
    <property type="nucleotide sequence ID" value="XM_054327215.1"/>
</dbReference>
<dbReference type="RefSeq" id="XP_054183191.1">
    <molecule id="P13797-1"/>
    <property type="nucleotide sequence ID" value="XM_054327216.1"/>
</dbReference>
<dbReference type="RefSeq" id="XP_054183192.1">
    <molecule id="P13797-1"/>
    <property type="nucleotide sequence ID" value="XM_054327217.1"/>
</dbReference>
<dbReference type="RefSeq" id="XP_054183193.1">
    <molecule id="P13797-1"/>
    <property type="nucleotide sequence ID" value="XM_054327218.1"/>
</dbReference>
<dbReference type="RefSeq" id="XP_054183194.1">
    <molecule id="P13797-1"/>
    <property type="nucleotide sequence ID" value="XM_054327219.1"/>
</dbReference>
<dbReference type="PDB" id="1AOA">
    <property type="method" value="X-ray"/>
    <property type="resolution" value="2.40 A"/>
    <property type="chains" value="A=101-375"/>
</dbReference>
<dbReference type="PDB" id="1WJO">
    <property type="method" value="NMR"/>
    <property type="chains" value="A=520-630"/>
</dbReference>
<dbReference type="PDB" id="7R94">
    <property type="method" value="EM"/>
    <property type="resolution" value="2.60 A"/>
    <property type="chains" value="F/G/H=1-630"/>
</dbReference>
<dbReference type="PDB" id="7SX8">
    <property type="method" value="EM"/>
    <property type="resolution" value="9.00 A"/>
    <property type="chains" value="D=1-630"/>
</dbReference>
<dbReference type="PDB" id="7SX9">
    <property type="method" value="EM"/>
    <property type="resolution" value="10.00 A"/>
    <property type="chains" value="D=1-630"/>
</dbReference>
<dbReference type="PDB" id="7SXA">
    <property type="method" value="EM"/>
    <property type="resolution" value="6.87 A"/>
    <property type="chains" value="A=1-630"/>
</dbReference>
<dbReference type="PDBsum" id="1AOA"/>
<dbReference type="PDBsum" id="1WJO"/>
<dbReference type="PDBsum" id="7R94"/>
<dbReference type="PDBsum" id="7SX8"/>
<dbReference type="PDBsum" id="7SX9"/>
<dbReference type="PDBsum" id="7SXA"/>
<dbReference type="BMRB" id="P13797"/>
<dbReference type="EMDB" id="EMD-24323"/>
<dbReference type="EMDB" id="EMD-25371"/>
<dbReference type="EMDB" id="EMD-25494"/>
<dbReference type="EMDB" id="EMD-25495"/>
<dbReference type="EMDB" id="EMD-25496"/>
<dbReference type="SMR" id="P13797"/>
<dbReference type="BioGRID" id="111372">
    <property type="interactions" value="254"/>
</dbReference>
<dbReference type="FunCoup" id="P13797">
    <property type="interactions" value="1369"/>
</dbReference>
<dbReference type="IntAct" id="P13797">
    <property type="interactions" value="46"/>
</dbReference>
<dbReference type="MINT" id="P13797"/>
<dbReference type="STRING" id="9606.ENSP00000348163"/>
<dbReference type="GlyGen" id="P13797">
    <property type="glycosylation" value="3 sites, 1 N-linked glycan (1 site), 1 O-linked glycan (1 site)"/>
</dbReference>
<dbReference type="iPTMnet" id="P13797"/>
<dbReference type="MetOSite" id="P13797"/>
<dbReference type="PhosphoSitePlus" id="P13797"/>
<dbReference type="SwissPalm" id="P13797"/>
<dbReference type="BioMuta" id="PLS3"/>
<dbReference type="DMDM" id="226694201"/>
<dbReference type="jPOST" id="P13797"/>
<dbReference type="MassIVE" id="P13797"/>
<dbReference type="PaxDb" id="9606-ENSP00000348163"/>
<dbReference type="PeptideAtlas" id="P13797"/>
<dbReference type="PRIDE" id="P13797"/>
<dbReference type="ProteomicsDB" id="4120"/>
<dbReference type="ProteomicsDB" id="52987">
    <molecule id="P13797-1"/>
</dbReference>
<dbReference type="ProteomicsDB" id="6788"/>
<dbReference type="Pumba" id="P13797"/>
<dbReference type="Antibodypedia" id="44530">
    <property type="antibodies" value="239 antibodies from 26 providers"/>
</dbReference>
<dbReference type="DNASU" id="5358"/>
<dbReference type="Ensembl" id="ENST00000289290.7">
    <molecule id="P13797-2"/>
    <property type="protein sequence ID" value="ENSP00000289290.4"/>
    <property type="gene ID" value="ENSG00000102024.19"/>
</dbReference>
<dbReference type="Ensembl" id="ENST00000355899.8">
    <molecule id="P13797-1"/>
    <property type="protein sequence ID" value="ENSP00000348163.3"/>
    <property type="gene ID" value="ENSG00000102024.19"/>
</dbReference>
<dbReference type="Ensembl" id="ENST00000539310.5">
    <molecule id="P13797-1"/>
    <property type="protein sequence ID" value="ENSP00000445339.2"/>
    <property type="gene ID" value="ENSG00000102024.19"/>
</dbReference>
<dbReference type="GeneID" id="5358"/>
<dbReference type="KEGG" id="hsa:5358"/>
<dbReference type="MANE-Select" id="ENST00000355899.8">
    <property type="protein sequence ID" value="ENSP00000348163.3"/>
    <property type="RefSeq nucleotide sequence ID" value="NM_005032.7"/>
    <property type="RefSeq protein sequence ID" value="NP_005023.2"/>
</dbReference>
<dbReference type="UCSC" id="uc004eqd.4">
    <molecule id="P13797-1"/>
    <property type="organism name" value="human"/>
</dbReference>
<dbReference type="AGR" id="HGNC:9091"/>
<dbReference type="CTD" id="5358"/>
<dbReference type="DisGeNET" id="5358"/>
<dbReference type="GeneCards" id="PLS3"/>
<dbReference type="HGNC" id="HGNC:9091">
    <property type="gene designation" value="PLS3"/>
</dbReference>
<dbReference type="HPA" id="ENSG00000102024">
    <property type="expression patterns" value="Low tissue specificity"/>
</dbReference>
<dbReference type="MalaCards" id="PLS3"/>
<dbReference type="MIM" id="166710">
    <property type="type" value="phenotype"/>
</dbReference>
<dbReference type="MIM" id="300131">
    <property type="type" value="gene"/>
</dbReference>
<dbReference type="MIM" id="300910">
    <property type="type" value="phenotype"/>
</dbReference>
<dbReference type="MIM" id="306950">
    <property type="type" value="phenotype"/>
</dbReference>
<dbReference type="neXtProt" id="NX_P13797"/>
<dbReference type="OpenTargets" id="ENSG00000102024"/>
<dbReference type="Orphanet" id="391330">
    <property type="disease" value="X-linked osteoporosis with fractures"/>
</dbReference>
<dbReference type="PharmGKB" id="PA33418"/>
<dbReference type="VEuPathDB" id="HostDB:ENSG00000102024"/>
<dbReference type="eggNOG" id="KOG0046">
    <property type="taxonomic scope" value="Eukaryota"/>
</dbReference>
<dbReference type="GeneTree" id="ENSGT00950000183097"/>
<dbReference type="InParanoid" id="P13797"/>
<dbReference type="OMA" id="TVNHLYV"/>
<dbReference type="OrthoDB" id="431378at2759"/>
<dbReference type="PAN-GO" id="P13797">
    <property type="GO annotations" value="6 GO annotations based on evolutionary models"/>
</dbReference>
<dbReference type="PhylomeDB" id="P13797"/>
<dbReference type="TreeFam" id="TF300680"/>
<dbReference type="PathwayCommons" id="P13797"/>
<dbReference type="SignaLink" id="P13797"/>
<dbReference type="BioGRID-ORCS" id="5358">
    <property type="hits" value="24 hits in 773 CRISPR screens"/>
</dbReference>
<dbReference type="ChiTaRS" id="PLS3">
    <property type="organism name" value="human"/>
</dbReference>
<dbReference type="EvolutionaryTrace" id="P13797"/>
<dbReference type="GeneWiki" id="PLS3"/>
<dbReference type="GenomeRNAi" id="5358"/>
<dbReference type="Pharos" id="P13797">
    <property type="development level" value="Tbio"/>
</dbReference>
<dbReference type="PRO" id="PR:P13797"/>
<dbReference type="Proteomes" id="UP000005640">
    <property type="component" value="Chromosome X"/>
</dbReference>
<dbReference type="RNAct" id="P13797">
    <property type="molecule type" value="protein"/>
</dbReference>
<dbReference type="Bgee" id="ENSG00000102024">
    <property type="expression patterns" value="Expressed in blood vessel layer and 210 other cell types or tissues"/>
</dbReference>
<dbReference type="ExpressionAtlas" id="P13797">
    <property type="expression patterns" value="baseline and differential"/>
</dbReference>
<dbReference type="GO" id="GO:0005884">
    <property type="term" value="C:actin filament"/>
    <property type="evidence" value="ECO:0000318"/>
    <property type="project" value="GO_Central"/>
</dbReference>
<dbReference type="GO" id="GO:0032432">
    <property type="term" value="C:actin filament bundle"/>
    <property type="evidence" value="ECO:0000318"/>
    <property type="project" value="GO_Central"/>
</dbReference>
<dbReference type="GO" id="GO:0005737">
    <property type="term" value="C:cytoplasm"/>
    <property type="evidence" value="ECO:0000318"/>
    <property type="project" value="GO_Central"/>
</dbReference>
<dbReference type="GO" id="GO:0005829">
    <property type="term" value="C:cytosol"/>
    <property type="evidence" value="ECO:0000314"/>
    <property type="project" value="HPA"/>
</dbReference>
<dbReference type="GO" id="GO:0031594">
    <property type="term" value="C:neuromuscular junction"/>
    <property type="evidence" value="ECO:0007669"/>
    <property type="project" value="Ensembl"/>
</dbReference>
<dbReference type="GO" id="GO:0005886">
    <property type="term" value="C:plasma membrane"/>
    <property type="evidence" value="ECO:0000314"/>
    <property type="project" value="HPA"/>
</dbReference>
<dbReference type="GO" id="GO:0051015">
    <property type="term" value="F:actin filament binding"/>
    <property type="evidence" value="ECO:0000318"/>
    <property type="project" value="GO_Central"/>
</dbReference>
<dbReference type="GO" id="GO:0005509">
    <property type="term" value="F:calcium ion binding"/>
    <property type="evidence" value="ECO:0007669"/>
    <property type="project" value="InterPro"/>
</dbReference>
<dbReference type="GO" id="GO:0098699">
    <property type="term" value="F:structural constituent of presynaptic actin cytoskeleton"/>
    <property type="evidence" value="ECO:0007669"/>
    <property type="project" value="Ensembl"/>
</dbReference>
<dbReference type="GO" id="GO:0051017">
    <property type="term" value="P:actin filament bundle assembly"/>
    <property type="evidence" value="ECO:0000318"/>
    <property type="project" value="GO_Central"/>
</dbReference>
<dbReference type="GO" id="GO:0051639">
    <property type="term" value="P:actin filament network formation"/>
    <property type="evidence" value="ECO:0000318"/>
    <property type="project" value="GO_Central"/>
</dbReference>
<dbReference type="GO" id="GO:0060348">
    <property type="term" value="P:bone development"/>
    <property type="evidence" value="ECO:0000315"/>
    <property type="project" value="UniProtKB"/>
</dbReference>
<dbReference type="GO" id="GO:0098693">
    <property type="term" value="P:regulation of synaptic vesicle cycle"/>
    <property type="evidence" value="ECO:0007669"/>
    <property type="project" value="Ensembl"/>
</dbReference>
<dbReference type="CDD" id="cd21328">
    <property type="entry name" value="CH_PLS3_rpt2"/>
    <property type="match status" value="1"/>
</dbReference>
<dbReference type="CDD" id="cd21331">
    <property type="entry name" value="CH_PLS3_rpt3"/>
    <property type="match status" value="1"/>
</dbReference>
<dbReference type="CDD" id="cd21334">
    <property type="entry name" value="CH_PLS3_rpt4"/>
    <property type="match status" value="1"/>
</dbReference>
<dbReference type="CDD" id="cd21292">
    <property type="entry name" value="CH_PLS_rpt1"/>
    <property type="match status" value="1"/>
</dbReference>
<dbReference type="CDD" id="cd00051">
    <property type="entry name" value="EFh"/>
    <property type="match status" value="1"/>
</dbReference>
<dbReference type="DisProt" id="DP02682"/>
<dbReference type="FunFam" id="1.10.238.10:FF:000059">
    <property type="entry name" value="Plastin 1"/>
    <property type="match status" value="1"/>
</dbReference>
<dbReference type="FunFam" id="1.10.418.10:FF:000010">
    <property type="entry name" value="Plastin-3 isoform 1"/>
    <property type="match status" value="1"/>
</dbReference>
<dbReference type="FunFam" id="1.10.418.10:FF:000012">
    <property type="entry name" value="Plastin-3 isoform 1"/>
    <property type="match status" value="1"/>
</dbReference>
<dbReference type="FunFam" id="1.10.418.10:FF:000014">
    <property type="entry name" value="Plastin-3 isoform 1"/>
    <property type="match status" value="1"/>
</dbReference>
<dbReference type="FunFam" id="1.10.418.10:FF:000025">
    <property type="entry name" value="Plastin-3 isoform 1"/>
    <property type="match status" value="1"/>
</dbReference>
<dbReference type="Gene3D" id="1.10.418.10">
    <property type="entry name" value="Calponin-like domain"/>
    <property type="match status" value="4"/>
</dbReference>
<dbReference type="Gene3D" id="1.10.238.10">
    <property type="entry name" value="EF-hand"/>
    <property type="match status" value="1"/>
</dbReference>
<dbReference type="InterPro" id="IPR001589">
    <property type="entry name" value="Actinin_actin-bd_CS"/>
</dbReference>
<dbReference type="InterPro" id="IPR001715">
    <property type="entry name" value="CH_dom"/>
</dbReference>
<dbReference type="InterPro" id="IPR036872">
    <property type="entry name" value="CH_dom_sf"/>
</dbReference>
<dbReference type="InterPro" id="IPR011992">
    <property type="entry name" value="EF-hand-dom_pair"/>
</dbReference>
<dbReference type="InterPro" id="IPR018247">
    <property type="entry name" value="EF_Hand_1_Ca_BS"/>
</dbReference>
<dbReference type="InterPro" id="IPR002048">
    <property type="entry name" value="EF_hand_dom"/>
</dbReference>
<dbReference type="InterPro" id="IPR039959">
    <property type="entry name" value="Fimbrin/Plastin"/>
</dbReference>
<dbReference type="PANTHER" id="PTHR19961">
    <property type="entry name" value="FIMBRIN/PLASTIN"/>
    <property type="match status" value="1"/>
</dbReference>
<dbReference type="PANTHER" id="PTHR19961:SF32">
    <property type="entry name" value="PLASTIN-3"/>
    <property type="match status" value="1"/>
</dbReference>
<dbReference type="Pfam" id="PF00307">
    <property type="entry name" value="CH"/>
    <property type="match status" value="4"/>
</dbReference>
<dbReference type="Pfam" id="PF13499">
    <property type="entry name" value="EF-hand_7"/>
    <property type="match status" value="1"/>
</dbReference>
<dbReference type="SMART" id="SM00033">
    <property type="entry name" value="CH"/>
    <property type="match status" value="4"/>
</dbReference>
<dbReference type="SMART" id="SM00054">
    <property type="entry name" value="EFh"/>
    <property type="match status" value="2"/>
</dbReference>
<dbReference type="SUPFAM" id="SSF47576">
    <property type="entry name" value="Calponin-homology domain, CH-domain"/>
    <property type="match status" value="1"/>
</dbReference>
<dbReference type="SUPFAM" id="SSF47473">
    <property type="entry name" value="EF-hand"/>
    <property type="match status" value="1"/>
</dbReference>
<dbReference type="PROSITE" id="PS00019">
    <property type="entry name" value="ACTININ_1"/>
    <property type="match status" value="2"/>
</dbReference>
<dbReference type="PROSITE" id="PS00020">
    <property type="entry name" value="ACTININ_2"/>
    <property type="match status" value="2"/>
</dbReference>
<dbReference type="PROSITE" id="PS50021">
    <property type="entry name" value="CH"/>
    <property type="match status" value="4"/>
</dbReference>
<dbReference type="PROSITE" id="PS00018">
    <property type="entry name" value="EF_HAND_1"/>
    <property type="match status" value="2"/>
</dbReference>
<dbReference type="PROSITE" id="PS50222">
    <property type="entry name" value="EF_HAND_2"/>
    <property type="match status" value="2"/>
</dbReference>
<protein>
    <recommendedName>
        <fullName>Plastin-3</fullName>
    </recommendedName>
    <alternativeName>
        <fullName evidence="13">T-fimbrin</fullName>
    </alternativeName>
    <alternativeName>
        <fullName>T-plastin</fullName>
    </alternativeName>
</protein>